<dbReference type="EMBL" id="AC034106">
    <property type="protein sequence ID" value="AAF97260.1"/>
    <property type="molecule type" value="Genomic_DNA"/>
</dbReference>
<dbReference type="EMBL" id="CP002684">
    <property type="protein sequence ID" value="AEE29638.1"/>
    <property type="molecule type" value="Genomic_DNA"/>
</dbReference>
<dbReference type="EMBL" id="BT015142">
    <property type="protein sequence ID" value="AAT85738.1"/>
    <property type="molecule type" value="mRNA"/>
</dbReference>
<dbReference type="EMBL" id="BT015655">
    <property type="protein sequence ID" value="AAU15154.1"/>
    <property type="molecule type" value="mRNA"/>
</dbReference>
<dbReference type="PIR" id="A86313">
    <property type="entry name" value="A86313"/>
</dbReference>
<dbReference type="RefSeq" id="NP_173222.1">
    <property type="nucleotide sequence ID" value="NM_101643.3"/>
</dbReference>
<dbReference type="SMR" id="Q9LMU7"/>
<dbReference type="GlyGen" id="Q9LMU7">
    <property type="glycosylation" value="2 sites"/>
</dbReference>
<dbReference type="PaxDb" id="3702-AT1G17800.1"/>
<dbReference type="ProteomicsDB" id="191695"/>
<dbReference type="EnsemblPlants" id="AT1G17800.1">
    <property type="protein sequence ID" value="AT1G17800.1"/>
    <property type="gene ID" value="AT1G17800"/>
</dbReference>
<dbReference type="GeneID" id="838358"/>
<dbReference type="Gramene" id="AT1G17800.1">
    <property type="protein sequence ID" value="AT1G17800.1"/>
    <property type="gene ID" value="AT1G17800"/>
</dbReference>
<dbReference type="KEGG" id="ath:AT1G17800"/>
<dbReference type="Araport" id="AT1G17800"/>
<dbReference type="TAIR" id="AT1G17800">
    <property type="gene designation" value="ENODL22"/>
</dbReference>
<dbReference type="eggNOG" id="ENOG502SSI8">
    <property type="taxonomic scope" value="Eukaryota"/>
</dbReference>
<dbReference type="HOGENOM" id="CLU_058719_4_1_1"/>
<dbReference type="InParanoid" id="Q9LMU7"/>
<dbReference type="OMA" id="YETCEAN"/>
<dbReference type="OrthoDB" id="1934652at2759"/>
<dbReference type="PRO" id="PR:Q9LMU7"/>
<dbReference type="Proteomes" id="UP000006548">
    <property type="component" value="Chromosome 1"/>
</dbReference>
<dbReference type="ExpressionAtlas" id="Q9LMU7">
    <property type="expression patterns" value="baseline and differential"/>
</dbReference>
<dbReference type="GO" id="GO:0009055">
    <property type="term" value="F:electron transfer activity"/>
    <property type="evidence" value="ECO:0007669"/>
    <property type="project" value="InterPro"/>
</dbReference>
<dbReference type="CDD" id="cd11013">
    <property type="entry name" value="Plantacyanin"/>
    <property type="match status" value="1"/>
</dbReference>
<dbReference type="Gene3D" id="2.60.40.420">
    <property type="entry name" value="Cupredoxins - blue copper proteins"/>
    <property type="match status" value="1"/>
</dbReference>
<dbReference type="InterPro" id="IPR008972">
    <property type="entry name" value="Cupredoxin"/>
</dbReference>
<dbReference type="InterPro" id="IPR039391">
    <property type="entry name" value="Phytocyanin-like"/>
</dbReference>
<dbReference type="InterPro" id="IPR003245">
    <property type="entry name" value="Phytocyanin_dom"/>
</dbReference>
<dbReference type="InterPro" id="IPR041844">
    <property type="entry name" value="Plantacyanin"/>
</dbReference>
<dbReference type="PANTHER" id="PTHR33021">
    <property type="entry name" value="BLUE COPPER PROTEIN"/>
    <property type="match status" value="1"/>
</dbReference>
<dbReference type="PANTHER" id="PTHR33021:SF292">
    <property type="entry name" value="EARLY NODULIN-LIKE PROTEIN 22"/>
    <property type="match status" value="1"/>
</dbReference>
<dbReference type="Pfam" id="PF02298">
    <property type="entry name" value="Cu_bind_like"/>
    <property type="match status" value="1"/>
</dbReference>
<dbReference type="SUPFAM" id="SSF49503">
    <property type="entry name" value="Cupredoxins"/>
    <property type="match status" value="1"/>
</dbReference>
<dbReference type="PROSITE" id="PS51485">
    <property type="entry name" value="PHYTOCYANIN"/>
    <property type="match status" value="1"/>
</dbReference>
<feature type="signal peptide" evidence="1">
    <location>
        <begin position="1"/>
        <end position="28"/>
    </location>
</feature>
<feature type="chain" id="PRO_0000457751" description="Early nodulin-like protein 22">
    <location>
        <begin position="29"/>
        <end position="140"/>
    </location>
</feature>
<feature type="domain" description="Phytocyanin" evidence="3">
    <location>
        <begin position="39"/>
        <end position="138"/>
    </location>
</feature>
<feature type="glycosylation site" description="N-linked (GlcNAc...) asparagine" evidence="2">
    <location>
        <position position="85"/>
    </location>
</feature>
<feature type="disulfide bond" evidence="3">
    <location>
        <begin position="92"/>
        <end position="126"/>
    </location>
</feature>
<organism>
    <name type="scientific">Arabidopsis thaliana</name>
    <name type="common">Mouse-ear cress</name>
    <dbReference type="NCBI Taxonomy" id="3702"/>
    <lineage>
        <taxon>Eukaryota</taxon>
        <taxon>Viridiplantae</taxon>
        <taxon>Streptophyta</taxon>
        <taxon>Embryophyta</taxon>
        <taxon>Tracheophyta</taxon>
        <taxon>Spermatophyta</taxon>
        <taxon>Magnoliopsida</taxon>
        <taxon>eudicotyledons</taxon>
        <taxon>Gunneridae</taxon>
        <taxon>Pentapetalae</taxon>
        <taxon>rosids</taxon>
        <taxon>malvids</taxon>
        <taxon>Brassicales</taxon>
        <taxon>Brassicaceae</taxon>
        <taxon>Camelineae</taxon>
        <taxon>Arabidopsis</taxon>
    </lineage>
</organism>
<accession>Q9LMU7</accession>
<comment type="function">
    <text evidence="5">May act as a carbohydrate transporter.</text>
</comment>
<comment type="similarity">
    <text evidence="6">Belongs to the early nodulin-like (ENODL) family.</text>
</comment>
<sequence>MAQSSGHVSYVAVTVPIAIVMTVLCLFLANAVTYARRPTTYIVGGDDGWDPVVPMDTWARGKTFYAGDILEFKYDYQRFNLIVVNRTGYETCEANVGAIEYSSGDDKIQLNYGYNYFIGTYTPEDCTTGLKMAIKALAPR</sequence>
<reference key="1">
    <citation type="journal article" date="2000" name="Nature">
        <title>Sequence and analysis of chromosome 1 of the plant Arabidopsis thaliana.</title>
        <authorList>
            <person name="Theologis A."/>
            <person name="Ecker J.R."/>
            <person name="Palm C.J."/>
            <person name="Federspiel N.A."/>
            <person name="Kaul S."/>
            <person name="White O."/>
            <person name="Alonso J."/>
            <person name="Altafi H."/>
            <person name="Araujo R."/>
            <person name="Bowman C.L."/>
            <person name="Brooks S.Y."/>
            <person name="Buehler E."/>
            <person name="Chan A."/>
            <person name="Chao Q."/>
            <person name="Chen H."/>
            <person name="Cheuk R.F."/>
            <person name="Chin C.W."/>
            <person name="Chung M.K."/>
            <person name="Conn L."/>
            <person name="Conway A.B."/>
            <person name="Conway A.R."/>
            <person name="Creasy T.H."/>
            <person name="Dewar K."/>
            <person name="Dunn P."/>
            <person name="Etgu P."/>
            <person name="Feldblyum T.V."/>
            <person name="Feng J.-D."/>
            <person name="Fong B."/>
            <person name="Fujii C.Y."/>
            <person name="Gill J.E."/>
            <person name="Goldsmith A.D."/>
            <person name="Haas B."/>
            <person name="Hansen N.F."/>
            <person name="Hughes B."/>
            <person name="Huizar L."/>
            <person name="Hunter J.L."/>
            <person name="Jenkins J."/>
            <person name="Johnson-Hopson C."/>
            <person name="Khan S."/>
            <person name="Khaykin E."/>
            <person name="Kim C.J."/>
            <person name="Koo H.L."/>
            <person name="Kremenetskaia I."/>
            <person name="Kurtz D.B."/>
            <person name="Kwan A."/>
            <person name="Lam B."/>
            <person name="Langin-Hooper S."/>
            <person name="Lee A."/>
            <person name="Lee J.M."/>
            <person name="Lenz C.A."/>
            <person name="Li J.H."/>
            <person name="Li Y.-P."/>
            <person name="Lin X."/>
            <person name="Liu S.X."/>
            <person name="Liu Z.A."/>
            <person name="Luros J.S."/>
            <person name="Maiti R."/>
            <person name="Marziali A."/>
            <person name="Militscher J."/>
            <person name="Miranda M."/>
            <person name="Nguyen M."/>
            <person name="Nierman W.C."/>
            <person name="Osborne B.I."/>
            <person name="Pai G."/>
            <person name="Peterson J."/>
            <person name="Pham P.K."/>
            <person name="Rizzo M."/>
            <person name="Rooney T."/>
            <person name="Rowley D."/>
            <person name="Sakano H."/>
            <person name="Salzberg S.L."/>
            <person name="Schwartz J.R."/>
            <person name="Shinn P."/>
            <person name="Southwick A.M."/>
            <person name="Sun H."/>
            <person name="Tallon L.J."/>
            <person name="Tambunga G."/>
            <person name="Toriumi M.J."/>
            <person name="Town C.D."/>
            <person name="Utterback T."/>
            <person name="Van Aken S."/>
            <person name="Vaysberg M."/>
            <person name="Vysotskaia V.S."/>
            <person name="Walker M."/>
            <person name="Wu D."/>
            <person name="Yu G."/>
            <person name="Fraser C.M."/>
            <person name="Venter J.C."/>
            <person name="Davis R.W."/>
        </authorList>
    </citation>
    <scope>NUCLEOTIDE SEQUENCE [LARGE SCALE GENOMIC DNA]</scope>
    <source>
        <strain>cv. Columbia</strain>
    </source>
</reference>
<reference key="2">
    <citation type="journal article" date="2017" name="Plant J.">
        <title>Araport11: a complete reannotation of the Arabidopsis thaliana reference genome.</title>
        <authorList>
            <person name="Cheng C.Y."/>
            <person name="Krishnakumar V."/>
            <person name="Chan A.P."/>
            <person name="Thibaud-Nissen F."/>
            <person name="Schobel S."/>
            <person name="Town C.D."/>
        </authorList>
    </citation>
    <scope>GENOME REANNOTATION</scope>
    <source>
        <strain>cv. Columbia</strain>
    </source>
</reference>
<reference key="3">
    <citation type="submission" date="2004-08" db="EMBL/GenBank/DDBJ databases">
        <title>Arabidopsis ORF clones.</title>
        <authorList>
            <person name="Cheuk R.F."/>
            <person name="Chen H."/>
            <person name="Kim C.J."/>
            <person name="Shinn P."/>
            <person name="Ecker J.R."/>
        </authorList>
    </citation>
    <scope>NUCLEOTIDE SEQUENCE [LARGE SCALE MRNA]</scope>
    <source>
        <strain>cv. Columbia</strain>
    </source>
</reference>
<reference key="4">
    <citation type="journal article" date="2009" name="Biosci. Biotechnol. Biochem.">
        <title>Genome-wide identification, structure and expression studies, and mutant collection of 22 early nodulin-like protein genes in Arabidopsis.</title>
        <authorList>
            <person name="Mashiguchi K."/>
            <person name="Asami T."/>
            <person name="Suzuki Y."/>
        </authorList>
    </citation>
    <scope>GENE FAMILY</scope>
    <scope>NOMENCLATURE</scope>
    <source>
        <strain>cv. Columbia</strain>
    </source>
</reference>
<reference key="5">
    <citation type="journal article" date="2014" name="Plant Cell Physiol.">
        <title>Emerging functions of nodulin-like proteins in non-nodulating plant species.</title>
        <authorList>
            <person name="Denance N."/>
            <person name="Szurek B."/>
            <person name="Noel L.D."/>
        </authorList>
    </citation>
    <scope>REVIEW ON NODULIN-LIKE PROTEINS</scope>
</reference>
<keyword id="KW-1015">Disulfide bond</keyword>
<keyword id="KW-0325">Glycoprotein</keyword>
<keyword id="KW-1185">Reference proteome</keyword>
<keyword id="KW-0732">Signal</keyword>
<name>ENL22_ARATH</name>
<proteinExistence type="evidence at transcript level"/>
<evidence type="ECO:0000255" key="1"/>
<evidence type="ECO:0000255" key="2">
    <source>
        <dbReference type="PROSITE-ProRule" id="PRU00498"/>
    </source>
</evidence>
<evidence type="ECO:0000255" key="3">
    <source>
        <dbReference type="PROSITE-ProRule" id="PRU00818"/>
    </source>
</evidence>
<evidence type="ECO:0000303" key="4">
    <source>
    </source>
</evidence>
<evidence type="ECO:0000303" key="5">
    <source>
    </source>
</evidence>
<evidence type="ECO:0000305" key="6"/>
<evidence type="ECO:0000312" key="7">
    <source>
        <dbReference type="Araport" id="AT1G17800"/>
    </source>
</evidence>
<evidence type="ECO:0000312" key="8">
    <source>
        <dbReference type="EMBL" id="AAF97260.1"/>
    </source>
</evidence>
<gene>
    <name evidence="4" type="primary">ENODL22</name>
    <name evidence="4" type="synonym">EN22</name>
    <name evidence="7" type="ordered locus">At1g17800</name>
    <name evidence="8" type="ORF">F2H15.3</name>
</gene>
<protein>
    <recommendedName>
        <fullName evidence="4">Early nodulin-like protein 22</fullName>
        <shortName evidence="4">AtENODL22</shortName>
    </recommendedName>
    <alternativeName>
        <fullName evidence="6">Phytocyanin-like protein ENODL22</fullName>
    </alternativeName>
</protein>